<sequence length="573" mass="63323">MANRQQPSPMPTAKYRGYDQVDIADRTWPNQRITTAPRWLSTDLRDGNQALIDPMSPVRKRAMFDLLVKMGYKEIEVGFPASGQTDFDFVRSIIEEPGAIPDDVTISVLTQAREDLIERTVESLKGARRATVHLYNATAPVFRRVVFRGSRDDIKQIAVDGTRLVMEYAEKLLGPETEFGYQYSPEIFTDTELDFALEVCEAVMDTYQPGPGREIILNLPATVERSTPSTHADRFEWMGRNLSRREHVCLSVHPHNDRGTAVAAAELALMAGADRIEGCLFGQGERTGNVDLVTLGMNLFSQGVDPQIDFSDIDEIRRTWEYCNQMEVHPRHPYVGDLVYTSFSGSHQDAIKKGFDAMEADAAARGVTVDDIEWAVPYLPIDPKDVGRSYEAVIRVNSQSGKGGIAYVLKNDHSLDLPRRMQIEFSKLIQAKTDAEGGEITPTAIWDVFQDEYLPNPDNPWGRIQVANGQTTTDRDGVDTLTVDATVDGAETTLVGSGNGPISAFFHALQGVGIDVRLLDYQEHTMSEGASAQAASYIECAIGDKVLWGIGIDANTTRASLKAVVSAVNRATR</sequence>
<accession>O31046</accession>
<accession>Q9L2F5</accession>
<accession>Q9L2L9</accession>
<gene>
    <name evidence="1" type="primary">leuA</name>
    <name type="ordered locus">SCO2528</name>
    <name type="ORF">SCC117.01c</name>
    <name type="ORF">SCC121.31c</name>
</gene>
<reference key="1">
    <citation type="journal article" date="1999" name="Microbiology">
        <title>End-product control of expression of branched-chain amino acid biosynthesis genes in Streptomyces coelicolor A3(2): paradoxical relationships between DNA sequence and regulatory phenotype.</title>
        <authorList>
            <person name="Craster H.L."/>
            <person name="Potter C.A."/>
            <person name="Baumberg S."/>
        </authorList>
    </citation>
    <scope>NUCLEOTIDE SEQUENCE [GENOMIC DNA]</scope>
    <source>
        <strain>A3(2) / D132</strain>
    </source>
</reference>
<reference key="2">
    <citation type="journal article" date="2002" name="Nature">
        <title>Complete genome sequence of the model actinomycete Streptomyces coelicolor A3(2).</title>
        <authorList>
            <person name="Bentley S.D."/>
            <person name="Chater K.F."/>
            <person name="Cerdeno-Tarraga A.-M."/>
            <person name="Challis G.L."/>
            <person name="Thomson N.R."/>
            <person name="James K.D."/>
            <person name="Harris D.E."/>
            <person name="Quail M.A."/>
            <person name="Kieser H."/>
            <person name="Harper D."/>
            <person name="Bateman A."/>
            <person name="Brown S."/>
            <person name="Chandra G."/>
            <person name="Chen C.W."/>
            <person name="Collins M."/>
            <person name="Cronin A."/>
            <person name="Fraser A."/>
            <person name="Goble A."/>
            <person name="Hidalgo J."/>
            <person name="Hornsby T."/>
            <person name="Howarth S."/>
            <person name="Huang C.-H."/>
            <person name="Kieser T."/>
            <person name="Larke L."/>
            <person name="Murphy L.D."/>
            <person name="Oliver K."/>
            <person name="O'Neil S."/>
            <person name="Rabbinowitsch E."/>
            <person name="Rajandream M.A."/>
            <person name="Rutherford K.M."/>
            <person name="Rutter S."/>
            <person name="Seeger K."/>
            <person name="Saunders D."/>
            <person name="Sharp S."/>
            <person name="Squares R."/>
            <person name="Squares S."/>
            <person name="Taylor K."/>
            <person name="Warren T."/>
            <person name="Wietzorrek A."/>
            <person name="Woodward J.R."/>
            <person name="Barrell B.G."/>
            <person name="Parkhill J."/>
            <person name="Hopwood D.A."/>
        </authorList>
    </citation>
    <scope>NUCLEOTIDE SEQUENCE [LARGE SCALE GENOMIC DNA]</scope>
    <source>
        <strain>ATCC BAA-471 / A3(2) / M145</strain>
    </source>
</reference>
<feature type="chain" id="PRO_0000140444" description="2-isopropylmalate synthase">
    <location>
        <begin position="1"/>
        <end position="573"/>
    </location>
</feature>
<feature type="domain" description="Pyruvate carboxyltransferase" evidence="1">
    <location>
        <begin position="37"/>
        <end position="314"/>
    </location>
</feature>
<feature type="region of interest" description="Regulatory domain" evidence="1">
    <location>
        <begin position="456"/>
        <end position="573"/>
    </location>
</feature>
<feature type="binding site" evidence="1">
    <location>
        <position position="46"/>
    </location>
    <ligand>
        <name>Mg(2+)</name>
        <dbReference type="ChEBI" id="CHEBI:18420"/>
    </ligand>
</feature>
<feature type="binding site" evidence="1">
    <location>
        <position position="253"/>
    </location>
    <ligand>
        <name>Mg(2+)</name>
        <dbReference type="ChEBI" id="CHEBI:18420"/>
    </ligand>
</feature>
<feature type="binding site" evidence="1">
    <location>
        <position position="255"/>
    </location>
    <ligand>
        <name>Mg(2+)</name>
        <dbReference type="ChEBI" id="CHEBI:18420"/>
    </ligand>
</feature>
<feature type="binding site" evidence="1">
    <location>
        <position position="289"/>
    </location>
    <ligand>
        <name>Mg(2+)</name>
        <dbReference type="ChEBI" id="CHEBI:18420"/>
    </ligand>
</feature>
<feature type="sequence conflict" description="In Ref. 1; AAB82586." evidence="2" ref="1">
    <original>E</original>
    <variation>V</variation>
    <location>
        <position position="74"/>
    </location>
</feature>
<feature type="sequence conflict" description="In Ref. 1; AAB82586." evidence="2" ref="1">
    <original>Y</original>
    <variation>F</variation>
    <location>
        <position position="135"/>
    </location>
</feature>
<comment type="function">
    <text evidence="1">Catalyzes the condensation of the acetyl group of acetyl-CoA with 3-methyl-2-oxobutanoate (2-ketoisovalerate) to form 3-carboxy-3-hydroxy-4-methylpentanoate (2-isopropylmalate).</text>
</comment>
<comment type="catalytic activity">
    <reaction evidence="1">
        <text>3-methyl-2-oxobutanoate + acetyl-CoA + H2O = (2S)-2-isopropylmalate + CoA + H(+)</text>
        <dbReference type="Rhea" id="RHEA:21524"/>
        <dbReference type="ChEBI" id="CHEBI:1178"/>
        <dbReference type="ChEBI" id="CHEBI:11851"/>
        <dbReference type="ChEBI" id="CHEBI:15377"/>
        <dbReference type="ChEBI" id="CHEBI:15378"/>
        <dbReference type="ChEBI" id="CHEBI:57287"/>
        <dbReference type="ChEBI" id="CHEBI:57288"/>
        <dbReference type="EC" id="2.3.3.13"/>
    </reaction>
</comment>
<comment type="cofactor">
    <cofactor evidence="1">
        <name>Mg(2+)</name>
        <dbReference type="ChEBI" id="CHEBI:18420"/>
    </cofactor>
</comment>
<comment type="pathway">
    <text evidence="1">Amino-acid biosynthesis; L-leucine biosynthesis; L-leucine from 3-methyl-2-oxobutanoate: step 1/4.</text>
</comment>
<comment type="subunit">
    <text evidence="1">Homodimer.</text>
</comment>
<comment type="subcellular location">
    <subcellularLocation>
        <location evidence="1">Cytoplasm</location>
    </subcellularLocation>
</comment>
<comment type="similarity">
    <text evidence="1">Belongs to the alpha-IPM synthase/homocitrate synthase family. LeuA type 2 subfamily.</text>
</comment>
<evidence type="ECO:0000255" key="1">
    <source>
        <dbReference type="HAMAP-Rule" id="MF_00572"/>
    </source>
</evidence>
<evidence type="ECO:0000305" key="2"/>
<dbReference type="EC" id="2.3.3.13" evidence="1"/>
<dbReference type="EMBL" id="AF026444">
    <property type="protein sequence ID" value="AAB82586.1"/>
    <property type="molecule type" value="Genomic_DNA"/>
</dbReference>
<dbReference type="EMBL" id="AL939113">
    <property type="protein sequence ID" value="CAD55194.1"/>
    <property type="molecule type" value="Genomic_DNA"/>
</dbReference>
<dbReference type="RefSeq" id="NP_733575.1">
    <property type="nucleotide sequence ID" value="NC_003888.3"/>
</dbReference>
<dbReference type="RefSeq" id="WP_003976275.1">
    <property type="nucleotide sequence ID" value="NZ_VNID01000001.1"/>
</dbReference>
<dbReference type="SMR" id="O31046"/>
<dbReference type="FunCoup" id="O31046">
    <property type="interactions" value="288"/>
</dbReference>
<dbReference type="STRING" id="100226.gene:17760130"/>
<dbReference type="PaxDb" id="100226-SCO2528"/>
<dbReference type="GeneID" id="91386476"/>
<dbReference type="KEGG" id="sco:SCO2528"/>
<dbReference type="PATRIC" id="fig|100226.15.peg.2573"/>
<dbReference type="eggNOG" id="COG0119">
    <property type="taxonomic scope" value="Bacteria"/>
</dbReference>
<dbReference type="HOGENOM" id="CLU_004588_3_0_11"/>
<dbReference type="InParanoid" id="O31046"/>
<dbReference type="OrthoDB" id="9803573at2"/>
<dbReference type="PhylomeDB" id="O31046"/>
<dbReference type="UniPathway" id="UPA00048">
    <property type="reaction ID" value="UER00070"/>
</dbReference>
<dbReference type="Proteomes" id="UP000001973">
    <property type="component" value="Chromosome"/>
</dbReference>
<dbReference type="GO" id="GO:0005737">
    <property type="term" value="C:cytoplasm"/>
    <property type="evidence" value="ECO:0007669"/>
    <property type="project" value="UniProtKB-SubCell"/>
</dbReference>
<dbReference type="GO" id="GO:0003852">
    <property type="term" value="F:2-isopropylmalate synthase activity"/>
    <property type="evidence" value="ECO:0007669"/>
    <property type="project" value="UniProtKB-UniRule"/>
</dbReference>
<dbReference type="GO" id="GO:0003985">
    <property type="term" value="F:acetyl-CoA C-acetyltransferase activity"/>
    <property type="evidence" value="ECO:0007669"/>
    <property type="project" value="UniProtKB-UniRule"/>
</dbReference>
<dbReference type="GO" id="GO:0000287">
    <property type="term" value="F:magnesium ion binding"/>
    <property type="evidence" value="ECO:0007669"/>
    <property type="project" value="UniProtKB-UniRule"/>
</dbReference>
<dbReference type="GO" id="GO:0009098">
    <property type="term" value="P:L-leucine biosynthetic process"/>
    <property type="evidence" value="ECO:0007669"/>
    <property type="project" value="UniProtKB-UniRule"/>
</dbReference>
<dbReference type="CDD" id="cd07942">
    <property type="entry name" value="DRE_TIM_LeuA"/>
    <property type="match status" value="1"/>
</dbReference>
<dbReference type="FunFam" id="3.20.20.70:FF:000045">
    <property type="entry name" value="2-isopropylmalate synthase"/>
    <property type="match status" value="1"/>
</dbReference>
<dbReference type="FunFam" id="3.30.160.270:FF:000006">
    <property type="entry name" value="2-isopropylmalate synthase"/>
    <property type="match status" value="1"/>
</dbReference>
<dbReference type="Gene3D" id="3.30.160.270">
    <property type="match status" value="1"/>
</dbReference>
<dbReference type="Gene3D" id="3.20.20.70">
    <property type="entry name" value="Aldolase class I"/>
    <property type="match status" value="1"/>
</dbReference>
<dbReference type="HAMAP" id="MF_00572">
    <property type="entry name" value="LeuA_type2"/>
    <property type="match status" value="1"/>
</dbReference>
<dbReference type="InterPro" id="IPR013709">
    <property type="entry name" value="2-isopropylmalate_synth_dimer"/>
</dbReference>
<dbReference type="InterPro" id="IPR002034">
    <property type="entry name" value="AIPM/Hcit_synth_CS"/>
</dbReference>
<dbReference type="InterPro" id="IPR013785">
    <property type="entry name" value="Aldolase_TIM"/>
</dbReference>
<dbReference type="InterPro" id="IPR005668">
    <property type="entry name" value="IPM_Synthase"/>
</dbReference>
<dbReference type="InterPro" id="IPR054692">
    <property type="entry name" value="LeuA-like_post-cat"/>
</dbReference>
<dbReference type="InterPro" id="IPR036230">
    <property type="entry name" value="LeuA_allosteric_dom_sf"/>
</dbReference>
<dbReference type="InterPro" id="IPR039371">
    <property type="entry name" value="LeuA_N_DRE-TIM"/>
</dbReference>
<dbReference type="InterPro" id="IPR000891">
    <property type="entry name" value="PYR_CT"/>
</dbReference>
<dbReference type="NCBIfam" id="TIGR00970">
    <property type="entry name" value="leuA_yeast"/>
    <property type="match status" value="1"/>
</dbReference>
<dbReference type="NCBIfam" id="NF002991">
    <property type="entry name" value="PRK03739.1"/>
    <property type="match status" value="1"/>
</dbReference>
<dbReference type="PANTHER" id="PTHR46911">
    <property type="match status" value="1"/>
</dbReference>
<dbReference type="PANTHER" id="PTHR46911:SF1">
    <property type="entry name" value="2-ISOPROPYLMALATE SYNTHASE"/>
    <property type="match status" value="1"/>
</dbReference>
<dbReference type="Pfam" id="PF00682">
    <property type="entry name" value="HMGL-like"/>
    <property type="match status" value="1"/>
</dbReference>
<dbReference type="Pfam" id="PF22615">
    <property type="entry name" value="IPMS_D2"/>
    <property type="match status" value="1"/>
</dbReference>
<dbReference type="Pfam" id="PF08502">
    <property type="entry name" value="LeuA_dimer"/>
    <property type="match status" value="1"/>
</dbReference>
<dbReference type="SMART" id="SM00917">
    <property type="entry name" value="LeuA_dimer"/>
    <property type="match status" value="1"/>
</dbReference>
<dbReference type="SUPFAM" id="SSF110921">
    <property type="entry name" value="2-isopropylmalate synthase LeuA, allosteric (dimerisation) domain"/>
    <property type="match status" value="1"/>
</dbReference>
<dbReference type="SUPFAM" id="SSF51569">
    <property type="entry name" value="Aldolase"/>
    <property type="match status" value="1"/>
</dbReference>
<dbReference type="SUPFAM" id="SSF89000">
    <property type="entry name" value="post-HMGL domain-like"/>
    <property type="match status" value="1"/>
</dbReference>
<dbReference type="PROSITE" id="PS00815">
    <property type="entry name" value="AIPM_HOMOCIT_SYNTH_1"/>
    <property type="match status" value="1"/>
</dbReference>
<dbReference type="PROSITE" id="PS00816">
    <property type="entry name" value="AIPM_HOMOCIT_SYNTH_2"/>
    <property type="match status" value="1"/>
</dbReference>
<dbReference type="PROSITE" id="PS50991">
    <property type="entry name" value="PYR_CT"/>
    <property type="match status" value="1"/>
</dbReference>
<organism>
    <name type="scientific">Streptomyces coelicolor (strain ATCC BAA-471 / A3(2) / M145)</name>
    <dbReference type="NCBI Taxonomy" id="100226"/>
    <lineage>
        <taxon>Bacteria</taxon>
        <taxon>Bacillati</taxon>
        <taxon>Actinomycetota</taxon>
        <taxon>Actinomycetes</taxon>
        <taxon>Kitasatosporales</taxon>
        <taxon>Streptomycetaceae</taxon>
        <taxon>Streptomyces</taxon>
        <taxon>Streptomyces albidoflavus group</taxon>
    </lineage>
</organism>
<proteinExistence type="inferred from homology"/>
<keyword id="KW-0028">Amino-acid biosynthesis</keyword>
<keyword id="KW-0100">Branched-chain amino acid biosynthesis</keyword>
<keyword id="KW-0963">Cytoplasm</keyword>
<keyword id="KW-0432">Leucine biosynthesis</keyword>
<keyword id="KW-0460">Magnesium</keyword>
<keyword id="KW-0479">Metal-binding</keyword>
<keyword id="KW-1185">Reference proteome</keyword>
<keyword id="KW-0808">Transferase</keyword>
<protein>
    <recommendedName>
        <fullName evidence="1">2-isopropylmalate synthase</fullName>
        <ecNumber evidence="1">2.3.3.13</ecNumber>
    </recommendedName>
    <alternativeName>
        <fullName evidence="1">Alpha-IPM synthase</fullName>
    </alternativeName>
    <alternativeName>
        <fullName evidence="1">Alpha-isopropylmalate synthase</fullName>
    </alternativeName>
</protein>
<name>LEU1_STRCO</name>